<accession>Q3V7P0</accession>
<organism>
    <name type="scientific">Yersinia pseudotuberculosis serotype I (strain IP32953)</name>
    <dbReference type="NCBI Taxonomy" id="273123"/>
    <lineage>
        <taxon>Bacteria</taxon>
        <taxon>Pseudomonadati</taxon>
        <taxon>Pseudomonadota</taxon>
        <taxon>Gammaproteobacteria</taxon>
        <taxon>Enterobacterales</taxon>
        <taxon>Yersiniaceae</taxon>
        <taxon>Yersinia</taxon>
    </lineage>
</organism>
<proteinExistence type="inferred from homology"/>
<evidence type="ECO:0000255" key="1">
    <source>
        <dbReference type="HAMAP-Rule" id="MF_00279"/>
    </source>
</evidence>
<name>PDXJ_YERPS</name>
<reference key="1">
    <citation type="journal article" date="2004" name="Proc. Natl. Acad. Sci. U.S.A.">
        <title>Insights into the evolution of Yersinia pestis through whole-genome comparison with Yersinia pseudotuberculosis.</title>
        <authorList>
            <person name="Chain P.S.G."/>
            <person name="Carniel E."/>
            <person name="Larimer F.W."/>
            <person name="Lamerdin J."/>
            <person name="Stoutland P.O."/>
            <person name="Regala W.M."/>
            <person name="Georgescu A.M."/>
            <person name="Vergez L.M."/>
            <person name="Land M.L."/>
            <person name="Motin V.L."/>
            <person name="Brubaker R.R."/>
            <person name="Fowler J."/>
            <person name="Hinnebusch J."/>
            <person name="Marceau M."/>
            <person name="Medigue C."/>
            <person name="Simonet M."/>
            <person name="Chenal-Francisque V."/>
            <person name="Souza B."/>
            <person name="Dacheux D."/>
            <person name="Elliott J.M."/>
            <person name="Derbise A."/>
            <person name="Hauser L.J."/>
            <person name="Garcia E."/>
        </authorList>
    </citation>
    <scope>NUCLEOTIDE SEQUENCE [LARGE SCALE GENOMIC DNA]</scope>
    <source>
        <strain>IP32953</strain>
    </source>
</reference>
<comment type="function">
    <text evidence="1">Catalyzes the complicated ring closure reaction between the two acyclic compounds 1-deoxy-D-xylulose-5-phosphate (DXP) and 3-amino-2-oxopropyl phosphate (1-amino-acetone-3-phosphate or AAP) to form pyridoxine 5'-phosphate (PNP) and inorganic phosphate.</text>
</comment>
<comment type="catalytic activity">
    <reaction evidence="1">
        <text>3-amino-2-oxopropyl phosphate + 1-deoxy-D-xylulose 5-phosphate = pyridoxine 5'-phosphate + phosphate + 2 H2O + H(+)</text>
        <dbReference type="Rhea" id="RHEA:15265"/>
        <dbReference type="ChEBI" id="CHEBI:15377"/>
        <dbReference type="ChEBI" id="CHEBI:15378"/>
        <dbReference type="ChEBI" id="CHEBI:43474"/>
        <dbReference type="ChEBI" id="CHEBI:57279"/>
        <dbReference type="ChEBI" id="CHEBI:57792"/>
        <dbReference type="ChEBI" id="CHEBI:58589"/>
        <dbReference type="EC" id="2.6.99.2"/>
    </reaction>
</comment>
<comment type="pathway">
    <text evidence="1">Cofactor biosynthesis; pyridoxine 5'-phosphate biosynthesis; pyridoxine 5'-phosphate from D-erythrose 4-phosphate: step 5/5.</text>
</comment>
<comment type="subunit">
    <text evidence="1">Homooctamer; tetramer of dimers.</text>
</comment>
<comment type="subcellular location">
    <subcellularLocation>
        <location evidence="1">Cytoplasm</location>
    </subcellularLocation>
</comment>
<comment type="similarity">
    <text evidence="1">Belongs to the PNP synthase family.</text>
</comment>
<protein>
    <recommendedName>
        <fullName evidence="1">Pyridoxine 5'-phosphate synthase</fullName>
        <shortName evidence="1">PNP synthase</shortName>
        <ecNumber evidence="1">2.6.99.2</ecNumber>
    </recommendedName>
</protein>
<keyword id="KW-0963">Cytoplasm</keyword>
<keyword id="KW-0664">Pyridoxine biosynthesis</keyword>
<keyword id="KW-0808">Transferase</keyword>
<sequence length="243" mass="26355">MADLLLGVNIDHIATLRNARGTIYPDPVQAAFIAEQAGADGITVHLREDRRHITDRDVRILRQTIQTRMNLEMAVTDEMVDIACDIKPHFCCLVPEKRQEVTTEGGLDVAGQVDKMTLVVGRLADVGILVSLFIDADFRQIDAAVAAGAPYIEIHTGAYADASTVLERQAELMRIAKAATYAAGKGLKVNAGHGLTYHNVQPIAALPEMHELNIGHAIIGQAVMTGLATAVTDMKVLMREARR</sequence>
<gene>
    <name evidence="1" type="primary">pdxJ</name>
    <name type="ordered locus">YPTB2887</name>
</gene>
<dbReference type="EC" id="2.6.99.2" evidence="1"/>
<dbReference type="EMBL" id="BX936398">
    <property type="protein sequence ID" value="CAH22125.1"/>
    <property type="molecule type" value="Genomic_DNA"/>
</dbReference>
<dbReference type="RefSeq" id="WP_011192826.1">
    <property type="nucleotide sequence ID" value="NC_006155.1"/>
</dbReference>
<dbReference type="SMR" id="Q3V7P0"/>
<dbReference type="KEGG" id="ypo:BZ17_3744"/>
<dbReference type="KEGG" id="yps:YPTB2887"/>
<dbReference type="PATRIC" id="fig|273123.14.peg.3926"/>
<dbReference type="UniPathway" id="UPA00244">
    <property type="reaction ID" value="UER00313"/>
</dbReference>
<dbReference type="Proteomes" id="UP000001011">
    <property type="component" value="Chromosome"/>
</dbReference>
<dbReference type="GO" id="GO:0005829">
    <property type="term" value="C:cytosol"/>
    <property type="evidence" value="ECO:0007669"/>
    <property type="project" value="TreeGrafter"/>
</dbReference>
<dbReference type="GO" id="GO:0033856">
    <property type="term" value="F:pyridoxine 5'-phosphate synthase activity"/>
    <property type="evidence" value="ECO:0007669"/>
    <property type="project" value="UniProtKB-EC"/>
</dbReference>
<dbReference type="GO" id="GO:0008615">
    <property type="term" value="P:pyridoxine biosynthetic process"/>
    <property type="evidence" value="ECO:0007669"/>
    <property type="project" value="UniProtKB-UniRule"/>
</dbReference>
<dbReference type="CDD" id="cd00003">
    <property type="entry name" value="PNPsynthase"/>
    <property type="match status" value="1"/>
</dbReference>
<dbReference type="FunFam" id="3.20.20.70:FF:000042">
    <property type="entry name" value="Pyridoxine 5'-phosphate synthase"/>
    <property type="match status" value="1"/>
</dbReference>
<dbReference type="Gene3D" id="3.20.20.70">
    <property type="entry name" value="Aldolase class I"/>
    <property type="match status" value="1"/>
</dbReference>
<dbReference type="HAMAP" id="MF_00279">
    <property type="entry name" value="PdxJ"/>
    <property type="match status" value="1"/>
</dbReference>
<dbReference type="InterPro" id="IPR013785">
    <property type="entry name" value="Aldolase_TIM"/>
</dbReference>
<dbReference type="InterPro" id="IPR004569">
    <property type="entry name" value="PyrdxlP_synth_PdxJ"/>
</dbReference>
<dbReference type="InterPro" id="IPR036130">
    <property type="entry name" value="Pyridoxine-5'_phos_synth"/>
</dbReference>
<dbReference type="NCBIfam" id="TIGR00559">
    <property type="entry name" value="pdxJ"/>
    <property type="match status" value="1"/>
</dbReference>
<dbReference type="NCBIfam" id="NF003623">
    <property type="entry name" value="PRK05265.1-1"/>
    <property type="match status" value="1"/>
</dbReference>
<dbReference type="NCBIfam" id="NF003624">
    <property type="entry name" value="PRK05265.1-2"/>
    <property type="match status" value="1"/>
</dbReference>
<dbReference type="NCBIfam" id="NF003625">
    <property type="entry name" value="PRK05265.1-3"/>
    <property type="match status" value="1"/>
</dbReference>
<dbReference type="NCBIfam" id="NF003627">
    <property type="entry name" value="PRK05265.1-5"/>
    <property type="match status" value="1"/>
</dbReference>
<dbReference type="PANTHER" id="PTHR30456">
    <property type="entry name" value="PYRIDOXINE 5'-PHOSPHATE SYNTHASE"/>
    <property type="match status" value="1"/>
</dbReference>
<dbReference type="PANTHER" id="PTHR30456:SF0">
    <property type="entry name" value="PYRIDOXINE 5'-PHOSPHATE SYNTHASE"/>
    <property type="match status" value="1"/>
</dbReference>
<dbReference type="Pfam" id="PF03740">
    <property type="entry name" value="PdxJ"/>
    <property type="match status" value="1"/>
</dbReference>
<dbReference type="SUPFAM" id="SSF63892">
    <property type="entry name" value="Pyridoxine 5'-phosphate synthase"/>
    <property type="match status" value="1"/>
</dbReference>
<feature type="chain" id="PRO_0000231861" description="Pyridoxine 5'-phosphate synthase">
    <location>
        <begin position="1"/>
        <end position="243"/>
    </location>
</feature>
<feature type="active site" description="Proton acceptor" evidence="1">
    <location>
        <position position="45"/>
    </location>
</feature>
<feature type="active site" description="Proton acceptor" evidence="1">
    <location>
        <position position="72"/>
    </location>
</feature>
<feature type="active site" description="Proton donor" evidence="1">
    <location>
        <position position="193"/>
    </location>
</feature>
<feature type="binding site" evidence="1">
    <location>
        <position position="9"/>
    </location>
    <ligand>
        <name>3-amino-2-oxopropyl phosphate</name>
        <dbReference type="ChEBI" id="CHEBI:57279"/>
    </ligand>
</feature>
<feature type="binding site" evidence="1">
    <location>
        <begin position="11"/>
        <end position="12"/>
    </location>
    <ligand>
        <name>1-deoxy-D-xylulose 5-phosphate</name>
        <dbReference type="ChEBI" id="CHEBI:57792"/>
    </ligand>
</feature>
<feature type="binding site" evidence="1">
    <location>
        <position position="20"/>
    </location>
    <ligand>
        <name>3-amino-2-oxopropyl phosphate</name>
        <dbReference type="ChEBI" id="CHEBI:57279"/>
    </ligand>
</feature>
<feature type="binding site" evidence="1">
    <location>
        <position position="47"/>
    </location>
    <ligand>
        <name>1-deoxy-D-xylulose 5-phosphate</name>
        <dbReference type="ChEBI" id="CHEBI:57792"/>
    </ligand>
</feature>
<feature type="binding site" evidence="1">
    <location>
        <position position="52"/>
    </location>
    <ligand>
        <name>1-deoxy-D-xylulose 5-phosphate</name>
        <dbReference type="ChEBI" id="CHEBI:57792"/>
    </ligand>
</feature>
<feature type="binding site" evidence="1">
    <location>
        <position position="102"/>
    </location>
    <ligand>
        <name>1-deoxy-D-xylulose 5-phosphate</name>
        <dbReference type="ChEBI" id="CHEBI:57792"/>
    </ligand>
</feature>
<feature type="binding site" evidence="1">
    <location>
        <position position="194"/>
    </location>
    <ligand>
        <name>3-amino-2-oxopropyl phosphate</name>
        <dbReference type="ChEBI" id="CHEBI:57279"/>
    </ligand>
</feature>
<feature type="binding site" evidence="1">
    <location>
        <begin position="215"/>
        <end position="216"/>
    </location>
    <ligand>
        <name>3-amino-2-oxopropyl phosphate</name>
        <dbReference type="ChEBI" id="CHEBI:57279"/>
    </ligand>
</feature>
<feature type="site" description="Transition state stabilizer" evidence="1">
    <location>
        <position position="153"/>
    </location>
</feature>